<evidence type="ECO:0000255" key="1">
    <source>
        <dbReference type="HAMAP-Rule" id="MF_01307"/>
    </source>
</evidence>
<evidence type="ECO:0000305" key="2"/>
<sequence>MAFKDNAVELEERVVAINRVTKVVKGGRRLRFAALVVVGDGNGRVGFGTGKAQEVPEAIRKAVEAAKKNMIEVPMVGTTIPHEVYTNFGGAKVLLKPAVEGSGVAAGGAVRAVIELAGVADITSKSLGSNTPINIVRATVEGLKQLKRAEEVAALRGISVSDLA</sequence>
<accession>P0DE94</accession>
<accession>P66584</accession>
<accession>Q9A1V7</accession>
<name>RS5_STRP3</name>
<proteinExistence type="inferred from homology"/>
<feature type="chain" id="PRO_0000131609" description="Small ribosomal subunit protein uS5">
    <location>
        <begin position="1"/>
        <end position="164"/>
    </location>
</feature>
<feature type="domain" description="S5 DRBM" evidence="1">
    <location>
        <begin position="10"/>
        <end position="73"/>
    </location>
</feature>
<gene>
    <name evidence="1" type="primary">rpsE</name>
    <name type="ordered locus">SpyM3_0057</name>
</gene>
<protein>
    <recommendedName>
        <fullName evidence="1">Small ribosomal subunit protein uS5</fullName>
    </recommendedName>
    <alternativeName>
        <fullName evidence="2">30S ribosomal protein S5</fullName>
    </alternativeName>
</protein>
<keyword id="KW-0687">Ribonucleoprotein</keyword>
<keyword id="KW-0689">Ribosomal protein</keyword>
<keyword id="KW-0694">RNA-binding</keyword>
<keyword id="KW-0699">rRNA-binding</keyword>
<organism>
    <name type="scientific">Streptococcus pyogenes serotype M3 (strain ATCC BAA-595 / MGAS315)</name>
    <dbReference type="NCBI Taxonomy" id="198466"/>
    <lineage>
        <taxon>Bacteria</taxon>
        <taxon>Bacillati</taxon>
        <taxon>Bacillota</taxon>
        <taxon>Bacilli</taxon>
        <taxon>Lactobacillales</taxon>
        <taxon>Streptococcaceae</taxon>
        <taxon>Streptococcus</taxon>
    </lineage>
</organism>
<comment type="function">
    <text evidence="1">With S4 and S12 plays an important role in translational accuracy.</text>
</comment>
<comment type="function">
    <text evidence="1">Located at the back of the 30S subunit body where it stabilizes the conformation of the head with respect to the body.</text>
</comment>
<comment type="subunit">
    <text evidence="1">Part of the 30S ribosomal subunit. Contacts proteins S4 and S8.</text>
</comment>
<comment type="domain">
    <text>The N-terminal domain interacts with the head of the 30S subunit; the C-terminal domain interacts with the body and contacts protein S4. The interaction surface between S4 and S5 is involved in control of translational fidelity.</text>
</comment>
<comment type="similarity">
    <text evidence="1">Belongs to the universal ribosomal protein uS5 family.</text>
</comment>
<reference key="1">
    <citation type="journal article" date="2002" name="Proc. Natl. Acad. Sci. U.S.A.">
        <title>Genome sequence of a serotype M3 strain of group A Streptococcus: phage-encoded toxins, the high-virulence phenotype, and clone emergence.</title>
        <authorList>
            <person name="Beres S.B."/>
            <person name="Sylva G.L."/>
            <person name="Barbian K.D."/>
            <person name="Lei B."/>
            <person name="Hoff J.S."/>
            <person name="Mammarella N.D."/>
            <person name="Liu M.-Y."/>
            <person name="Smoot J.C."/>
            <person name="Porcella S.F."/>
            <person name="Parkins L.D."/>
            <person name="Campbell D.S."/>
            <person name="Smith T.M."/>
            <person name="McCormick J.K."/>
            <person name="Leung D.Y.M."/>
            <person name="Schlievert P.M."/>
            <person name="Musser J.M."/>
        </authorList>
    </citation>
    <scope>NUCLEOTIDE SEQUENCE [LARGE SCALE GENOMIC DNA]</scope>
    <source>
        <strain>ATCC BAA-595 / MGAS315</strain>
    </source>
</reference>
<dbReference type="EMBL" id="AE014074">
    <property type="protein sequence ID" value="AAM78664.1"/>
    <property type="molecule type" value="Genomic_DNA"/>
</dbReference>
<dbReference type="RefSeq" id="WP_002986625.1">
    <property type="nucleotide sequence ID" value="NC_004070.1"/>
</dbReference>
<dbReference type="SMR" id="P0DE94"/>
<dbReference type="GeneID" id="69900043"/>
<dbReference type="KEGG" id="spg:SpyM3_0057"/>
<dbReference type="HOGENOM" id="CLU_065898_2_2_9"/>
<dbReference type="Proteomes" id="UP000000564">
    <property type="component" value="Chromosome"/>
</dbReference>
<dbReference type="GO" id="GO:0015935">
    <property type="term" value="C:small ribosomal subunit"/>
    <property type="evidence" value="ECO:0007669"/>
    <property type="project" value="InterPro"/>
</dbReference>
<dbReference type="GO" id="GO:0019843">
    <property type="term" value="F:rRNA binding"/>
    <property type="evidence" value="ECO:0007669"/>
    <property type="project" value="UniProtKB-UniRule"/>
</dbReference>
<dbReference type="GO" id="GO:0003735">
    <property type="term" value="F:structural constituent of ribosome"/>
    <property type="evidence" value="ECO:0007669"/>
    <property type="project" value="InterPro"/>
</dbReference>
<dbReference type="GO" id="GO:0006412">
    <property type="term" value="P:translation"/>
    <property type="evidence" value="ECO:0007669"/>
    <property type="project" value="UniProtKB-UniRule"/>
</dbReference>
<dbReference type="FunFam" id="3.30.160.20:FF:000001">
    <property type="entry name" value="30S ribosomal protein S5"/>
    <property type="match status" value="1"/>
</dbReference>
<dbReference type="FunFam" id="3.30.230.10:FF:000002">
    <property type="entry name" value="30S ribosomal protein S5"/>
    <property type="match status" value="1"/>
</dbReference>
<dbReference type="Gene3D" id="3.30.160.20">
    <property type="match status" value="1"/>
</dbReference>
<dbReference type="Gene3D" id="3.30.230.10">
    <property type="match status" value="1"/>
</dbReference>
<dbReference type="HAMAP" id="MF_01307_B">
    <property type="entry name" value="Ribosomal_uS5_B"/>
    <property type="match status" value="1"/>
</dbReference>
<dbReference type="InterPro" id="IPR020568">
    <property type="entry name" value="Ribosomal_Su5_D2-typ_SF"/>
</dbReference>
<dbReference type="InterPro" id="IPR000851">
    <property type="entry name" value="Ribosomal_uS5"/>
</dbReference>
<dbReference type="InterPro" id="IPR005712">
    <property type="entry name" value="Ribosomal_uS5_bac-type"/>
</dbReference>
<dbReference type="InterPro" id="IPR005324">
    <property type="entry name" value="Ribosomal_uS5_C"/>
</dbReference>
<dbReference type="InterPro" id="IPR013810">
    <property type="entry name" value="Ribosomal_uS5_N"/>
</dbReference>
<dbReference type="InterPro" id="IPR018192">
    <property type="entry name" value="Ribosomal_uS5_N_CS"/>
</dbReference>
<dbReference type="InterPro" id="IPR014721">
    <property type="entry name" value="Ribsml_uS5_D2-typ_fold_subgr"/>
</dbReference>
<dbReference type="NCBIfam" id="TIGR01021">
    <property type="entry name" value="rpsE_bact"/>
    <property type="match status" value="1"/>
</dbReference>
<dbReference type="PANTHER" id="PTHR48277">
    <property type="entry name" value="MITOCHONDRIAL RIBOSOMAL PROTEIN S5"/>
    <property type="match status" value="1"/>
</dbReference>
<dbReference type="PANTHER" id="PTHR48277:SF1">
    <property type="entry name" value="MITOCHONDRIAL RIBOSOMAL PROTEIN S5"/>
    <property type="match status" value="1"/>
</dbReference>
<dbReference type="Pfam" id="PF00333">
    <property type="entry name" value="Ribosomal_S5"/>
    <property type="match status" value="1"/>
</dbReference>
<dbReference type="Pfam" id="PF03719">
    <property type="entry name" value="Ribosomal_S5_C"/>
    <property type="match status" value="1"/>
</dbReference>
<dbReference type="SUPFAM" id="SSF54768">
    <property type="entry name" value="dsRNA-binding domain-like"/>
    <property type="match status" value="1"/>
</dbReference>
<dbReference type="SUPFAM" id="SSF54211">
    <property type="entry name" value="Ribosomal protein S5 domain 2-like"/>
    <property type="match status" value="1"/>
</dbReference>
<dbReference type="PROSITE" id="PS00585">
    <property type="entry name" value="RIBOSOMAL_S5"/>
    <property type="match status" value="1"/>
</dbReference>
<dbReference type="PROSITE" id="PS50881">
    <property type="entry name" value="S5_DSRBD"/>
    <property type="match status" value="1"/>
</dbReference>